<gene>
    <name evidence="1" type="primary">lysS</name>
    <name type="ordered locus">YPTB3163</name>
</gene>
<feature type="chain" id="PRO_1000012970" description="Lysine--tRNA ligase">
    <location>
        <begin position="1"/>
        <end position="505"/>
    </location>
</feature>
<feature type="binding site" evidence="1">
    <location>
        <position position="415"/>
    </location>
    <ligand>
        <name>Mg(2+)</name>
        <dbReference type="ChEBI" id="CHEBI:18420"/>
        <label>1</label>
    </ligand>
</feature>
<feature type="binding site" evidence="1">
    <location>
        <position position="422"/>
    </location>
    <ligand>
        <name>Mg(2+)</name>
        <dbReference type="ChEBI" id="CHEBI:18420"/>
        <label>1</label>
    </ligand>
</feature>
<feature type="binding site" evidence="1">
    <location>
        <position position="422"/>
    </location>
    <ligand>
        <name>Mg(2+)</name>
        <dbReference type="ChEBI" id="CHEBI:18420"/>
        <label>2</label>
    </ligand>
</feature>
<sequence length="505" mass="57577">MSEQKPQVAEQAQELNSELQARREKLAVLRGKGIAFPNDFRRENLSDQLHAEFDSKENEELEALNIDVTVAGRMMTRRIMGKASFVTLQDVGGRIQLYVSRDDLPEGVYNEEFKKWDLGDILGARGKLFKTKTGELSIHCSELRLLTKALRPLPDKFHGLADQETRYRQRYLDLIANDESRHTFKVRSQVMSGIRSFMVEKGFMEVETPMMQVIPGGASARPFVTHHNALDIDMYLRIAPELYLKRLVVGGFERVFEINRNFRNEGVSPRHNPEFTMMELYMAYADYKDLIVLTEELFRTLTETILGSSVVQYGEQTFDFGKPFAKLTMKEAICKYRPETNVADLDDMDKAVAIAESLGIKVEKSWGLGRIQCEIFEETAESHLIQPTFITEYPAEVSPLARRNDDNPFITDRFEFFIGGREIGNGFSELNDAEDQAQRFADQVSAKEAGDDEAMFYDEDYITALEHGLPPTAGLGIGIDRMVMLFTNSHTIRDVILFPAMRPVK</sequence>
<name>SYK_YERPS</name>
<accession>Q666T3</accession>
<keyword id="KW-0030">Aminoacyl-tRNA synthetase</keyword>
<keyword id="KW-0067">ATP-binding</keyword>
<keyword id="KW-0963">Cytoplasm</keyword>
<keyword id="KW-0436">Ligase</keyword>
<keyword id="KW-0460">Magnesium</keyword>
<keyword id="KW-0479">Metal-binding</keyword>
<keyword id="KW-0547">Nucleotide-binding</keyword>
<keyword id="KW-0648">Protein biosynthesis</keyword>
<proteinExistence type="inferred from homology"/>
<evidence type="ECO:0000255" key="1">
    <source>
        <dbReference type="HAMAP-Rule" id="MF_00252"/>
    </source>
</evidence>
<protein>
    <recommendedName>
        <fullName evidence="1">Lysine--tRNA ligase</fullName>
        <ecNumber evidence="1">6.1.1.6</ecNumber>
    </recommendedName>
    <alternativeName>
        <fullName evidence="1">Lysyl-tRNA synthetase</fullName>
        <shortName evidence="1">LysRS</shortName>
    </alternativeName>
</protein>
<reference key="1">
    <citation type="journal article" date="2004" name="Proc. Natl. Acad. Sci. U.S.A.">
        <title>Insights into the evolution of Yersinia pestis through whole-genome comparison with Yersinia pseudotuberculosis.</title>
        <authorList>
            <person name="Chain P.S.G."/>
            <person name="Carniel E."/>
            <person name="Larimer F.W."/>
            <person name="Lamerdin J."/>
            <person name="Stoutland P.O."/>
            <person name="Regala W.M."/>
            <person name="Georgescu A.M."/>
            <person name="Vergez L.M."/>
            <person name="Land M.L."/>
            <person name="Motin V.L."/>
            <person name="Brubaker R.R."/>
            <person name="Fowler J."/>
            <person name="Hinnebusch J."/>
            <person name="Marceau M."/>
            <person name="Medigue C."/>
            <person name="Simonet M."/>
            <person name="Chenal-Francisque V."/>
            <person name="Souza B."/>
            <person name="Dacheux D."/>
            <person name="Elliott J.M."/>
            <person name="Derbise A."/>
            <person name="Hauser L.J."/>
            <person name="Garcia E."/>
        </authorList>
    </citation>
    <scope>NUCLEOTIDE SEQUENCE [LARGE SCALE GENOMIC DNA]</scope>
    <source>
        <strain>IP32953</strain>
    </source>
</reference>
<comment type="catalytic activity">
    <reaction evidence="1">
        <text>tRNA(Lys) + L-lysine + ATP = L-lysyl-tRNA(Lys) + AMP + diphosphate</text>
        <dbReference type="Rhea" id="RHEA:20792"/>
        <dbReference type="Rhea" id="RHEA-COMP:9696"/>
        <dbReference type="Rhea" id="RHEA-COMP:9697"/>
        <dbReference type="ChEBI" id="CHEBI:30616"/>
        <dbReference type="ChEBI" id="CHEBI:32551"/>
        <dbReference type="ChEBI" id="CHEBI:33019"/>
        <dbReference type="ChEBI" id="CHEBI:78442"/>
        <dbReference type="ChEBI" id="CHEBI:78529"/>
        <dbReference type="ChEBI" id="CHEBI:456215"/>
        <dbReference type="EC" id="6.1.1.6"/>
    </reaction>
</comment>
<comment type="cofactor">
    <cofactor evidence="1">
        <name>Mg(2+)</name>
        <dbReference type="ChEBI" id="CHEBI:18420"/>
    </cofactor>
    <text evidence="1">Binds 3 Mg(2+) ions per subunit.</text>
</comment>
<comment type="subunit">
    <text evidence="1">Homodimer.</text>
</comment>
<comment type="subcellular location">
    <subcellularLocation>
        <location evidence="1">Cytoplasm</location>
    </subcellularLocation>
</comment>
<comment type="similarity">
    <text evidence="1">Belongs to the class-II aminoacyl-tRNA synthetase family.</text>
</comment>
<organism>
    <name type="scientific">Yersinia pseudotuberculosis serotype I (strain IP32953)</name>
    <dbReference type="NCBI Taxonomy" id="273123"/>
    <lineage>
        <taxon>Bacteria</taxon>
        <taxon>Pseudomonadati</taxon>
        <taxon>Pseudomonadota</taxon>
        <taxon>Gammaproteobacteria</taxon>
        <taxon>Enterobacterales</taxon>
        <taxon>Yersiniaceae</taxon>
        <taxon>Yersinia</taxon>
    </lineage>
</organism>
<dbReference type="EC" id="6.1.1.6" evidence="1"/>
<dbReference type="EMBL" id="BX936398">
    <property type="protein sequence ID" value="CAH22401.1"/>
    <property type="molecule type" value="Genomic_DNA"/>
</dbReference>
<dbReference type="RefSeq" id="WP_002209930.1">
    <property type="nucleotide sequence ID" value="NZ_CP009712.1"/>
</dbReference>
<dbReference type="SMR" id="Q666T3"/>
<dbReference type="GeneID" id="57973752"/>
<dbReference type="KEGG" id="ypo:BZ17_3447"/>
<dbReference type="KEGG" id="yps:YPTB3163"/>
<dbReference type="PATRIC" id="fig|273123.14.peg.3619"/>
<dbReference type="Proteomes" id="UP000001011">
    <property type="component" value="Chromosome"/>
</dbReference>
<dbReference type="GO" id="GO:0005829">
    <property type="term" value="C:cytosol"/>
    <property type="evidence" value="ECO:0007669"/>
    <property type="project" value="TreeGrafter"/>
</dbReference>
<dbReference type="GO" id="GO:0005524">
    <property type="term" value="F:ATP binding"/>
    <property type="evidence" value="ECO:0007669"/>
    <property type="project" value="UniProtKB-UniRule"/>
</dbReference>
<dbReference type="GO" id="GO:0004824">
    <property type="term" value="F:lysine-tRNA ligase activity"/>
    <property type="evidence" value="ECO:0007669"/>
    <property type="project" value="UniProtKB-UniRule"/>
</dbReference>
<dbReference type="GO" id="GO:0000287">
    <property type="term" value="F:magnesium ion binding"/>
    <property type="evidence" value="ECO:0007669"/>
    <property type="project" value="UniProtKB-UniRule"/>
</dbReference>
<dbReference type="GO" id="GO:0000049">
    <property type="term" value="F:tRNA binding"/>
    <property type="evidence" value="ECO:0007669"/>
    <property type="project" value="TreeGrafter"/>
</dbReference>
<dbReference type="GO" id="GO:0006430">
    <property type="term" value="P:lysyl-tRNA aminoacylation"/>
    <property type="evidence" value="ECO:0007669"/>
    <property type="project" value="UniProtKB-UniRule"/>
</dbReference>
<dbReference type="CDD" id="cd00775">
    <property type="entry name" value="LysRS_core"/>
    <property type="match status" value="1"/>
</dbReference>
<dbReference type="CDD" id="cd04322">
    <property type="entry name" value="LysRS_N"/>
    <property type="match status" value="1"/>
</dbReference>
<dbReference type="FunFam" id="2.40.50.140:FF:000024">
    <property type="entry name" value="Lysine--tRNA ligase"/>
    <property type="match status" value="1"/>
</dbReference>
<dbReference type="FunFam" id="3.30.930.10:FF:000001">
    <property type="entry name" value="Lysine--tRNA ligase"/>
    <property type="match status" value="1"/>
</dbReference>
<dbReference type="Gene3D" id="3.30.930.10">
    <property type="entry name" value="Bira Bifunctional Protein, Domain 2"/>
    <property type="match status" value="1"/>
</dbReference>
<dbReference type="Gene3D" id="2.40.50.140">
    <property type="entry name" value="Nucleic acid-binding proteins"/>
    <property type="match status" value="1"/>
</dbReference>
<dbReference type="HAMAP" id="MF_00252">
    <property type="entry name" value="Lys_tRNA_synth_class2"/>
    <property type="match status" value="1"/>
</dbReference>
<dbReference type="InterPro" id="IPR004364">
    <property type="entry name" value="Aa-tRNA-synt_II"/>
</dbReference>
<dbReference type="InterPro" id="IPR006195">
    <property type="entry name" value="aa-tRNA-synth_II"/>
</dbReference>
<dbReference type="InterPro" id="IPR045864">
    <property type="entry name" value="aa-tRNA-synth_II/BPL/LPL"/>
</dbReference>
<dbReference type="InterPro" id="IPR002313">
    <property type="entry name" value="Lys-tRNA-ligase_II"/>
</dbReference>
<dbReference type="InterPro" id="IPR034762">
    <property type="entry name" value="Lys-tRNA-ligase_II_bac/euk"/>
</dbReference>
<dbReference type="InterPro" id="IPR044136">
    <property type="entry name" value="Lys-tRNA-ligase_II_N"/>
</dbReference>
<dbReference type="InterPro" id="IPR018149">
    <property type="entry name" value="Lys-tRNA-synth_II_C"/>
</dbReference>
<dbReference type="InterPro" id="IPR012340">
    <property type="entry name" value="NA-bd_OB-fold"/>
</dbReference>
<dbReference type="InterPro" id="IPR004365">
    <property type="entry name" value="NA-bd_OB_tRNA"/>
</dbReference>
<dbReference type="NCBIfam" id="TIGR00499">
    <property type="entry name" value="lysS_bact"/>
    <property type="match status" value="1"/>
</dbReference>
<dbReference type="NCBIfam" id="NF001756">
    <property type="entry name" value="PRK00484.1"/>
    <property type="match status" value="1"/>
</dbReference>
<dbReference type="PANTHER" id="PTHR42918:SF15">
    <property type="entry name" value="LYSINE--TRNA LIGASE, CHLOROPLASTIC_MITOCHONDRIAL"/>
    <property type="match status" value="1"/>
</dbReference>
<dbReference type="PANTHER" id="PTHR42918">
    <property type="entry name" value="LYSYL-TRNA SYNTHETASE"/>
    <property type="match status" value="1"/>
</dbReference>
<dbReference type="Pfam" id="PF00152">
    <property type="entry name" value="tRNA-synt_2"/>
    <property type="match status" value="1"/>
</dbReference>
<dbReference type="Pfam" id="PF01336">
    <property type="entry name" value="tRNA_anti-codon"/>
    <property type="match status" value="1"/>
</dbReference>
<dbReference type="PIRSF" id="PIRSF039101">
    <property type="entry name" value="LysRS2"/>
    <property type="match status" value="1"/>
</dbReference>
<dbReference type="PRINTS" id="PR00982">
    <property type="entry name" value="TRNASYNTHLYS"/>
</dbReference>
<dbReference type="SUPFAM" id="SSF55681">
    <property type="entry name" value="Class II aaRS and biotin synthetases"/>
    <property type="match status" value="1"/>
</dbReference>
<dbReference type="SUPFAM" id="SSF50249">
    <property type="entry name" value="Nucleic acid-binding proteins"/>
    <property type="match status" value="1"/>
</dbReference>
<dbReference type="PROSITE" id="PS50862">
    <property type="entry name" value="AA_TRNA_LIGASE_II"/>
    <property type="match status" value="1"/>
</dbReference>